<feature type="chain" id="PRO_0000149546" description="Non-structural protein 2">
    <location>
        <begin position="1"/>
        <end position="317"/>
    </location>
</feature>
<feature type="region of interest" description="RNA-binding" evidence="1">
    <location>
        <begin position="205"/>
        <end position="241"/>
    </location>
</feature>
<feature type="active site" description="For NTPase and RTPase activities" evidence="1">
    <location>
        <position position="225"/>
    </location>
</feature>
<feature type="binding site" evidence="1">
    <location>
        <begin position="107"/>
        <end position="109"/>
    </location>
    <ligand>
        <name>ATP</name>
        <dbReference type="ChEBI" id="CHEBI:30616"/>
    </ligand>
</feature>
<feature type="binding site" evidence="1">
    <location>
        <position position="188"/>
    </location>
    <ligand>
        <name>ATP</name>
        <dbReference type="ChEBI" id="CHEBI:30616"/>
    </ligand>
</feature>
<feature type="binding site" evidence="1">
    <location>
        <begin position="221"/>
        <end position="223"/>
    </location>
    <ligand>
        <name>ATP</name>
        <dbReference type="ChEBI" id="CHEBI:30616"/>
    </ligand>
</feature>
<feature type="binding site" evidence="1">
    <location>
        <position position="227"/>
    </location>
    <ligand>
        <name>ATP</name>
        <dbReference type="ChEBI" id="CHEBI:30616"/>
    </ligand>
</feature>
<dbReference type="EC" id="3.6.4.-" evidence="1"/>
<dbReference type="EMBL" id="J02420">
    <property type="status" value="NOT_ANNOTATED_CDS"/>
    <property type="molecule type" value="Genomic_RNA"/>
</dbReference>
<dbReference type="SMR" id="P03538"/>
<dbReference type="Proteomes" id="UP000008657">
    <property type="component" value="Genome"/>
</dbReference>
<dbReference type="GO" id="GO:0030430">
    <property type="term" value="C:host cell cytoplasm"/>
    <property type="evidence" value="ECO:0007669"/>
    <property type="project" value="UniProtKB-SubCell"/>
</dbReference>
<dbReference type="GO" id="GO:0005524">
    <property type="term" value="F:ATP binding"/>
    <property type="evidence" value="ECO:0007669"/>
    <property type="project" value="UniProtKB-KW"/>
</dbReference>
<dbReference type="GO" id="GO:0046872">
    <property type="term" value="F:metal ion binding"/>
    <property type="evidence" value="ECO:0007669"/>
    <property type="project" value="UniProtKB-UniRule"/>
</dbReference>
<dbReference type="GO" id="GO:0004550">
    <property type="term" value="F:nucleoside diphosphate kinase activity"/>
    <property type="evidence" value="ECO:0007669"/>
    <property type="project" value="InterPro"/>
</dbReference>
<dbReference type="GO" id="GO:0017111">
    <property type="term" value="F:ribonucleoside triphosphate phosphatase activity"/>
    <property type="evidence" value="ECO:0007669"/>
    <property type="project" value="InterPro"/>
</dbReference>
<dbReference type="GO" id="GO:0003723">
    <property type="term" value="F:RNA binding"/>
    <property type="evidence" value="ECO:0007669"/>
    <property type="project" value="UniProtKB-UniRule"/>
</dbReference>
<dbReference type="GO" id="GO:0019079">
    <property type="term" value="P:viral genome replication"/>
    <property type="evidence" value="ECO:0007669"/>
    <property type="project" value="UniProtKB-UniRule"/>
</dbReference>
<dbReference type="Gene3D" id="3.30.428.20">
    <property type="entry name" value="Rotavirus NSP2 fragment, C-terminal domain"/>
    <property type="match status" value="1"/>
</dbReference>
<dbReference type="Gene3D" id="3.90.1400.10">
    <property type="entry name" value="Rotavirus NSP2 fragment, N-terminal domain"/>
    <property type="match status" value="1"/>
</dbReference>
<dbReference type="HAMAP" id="MF_04089">
    <property type="entry name" value="ROTA_NSP2"/>
    <property type="match status" value="1"/>
</dbReference>
<dbReference type="InterPro" id="IPR048306">
    <property type="entry name" value="Rota_NS35_C"/>
</dbReference>
<dbReference type="InterPro" id="IPR048573">
    <property type="entry name" value="Rota_NS35_N"/>
</dbReference>
<dbReference type="InterPro" id="IPR003668">
    <property type="entry name" value="Rotavirus_NSP2"/>
</dbReference>
<dbReference type="InterPro" id="IPR024076">
    <property type="entry name" value="Rotavirus_NSP2_C"/>
</dbReference>
<dbReference type="InterPro" id="IPR024068">
    <property type="entry name" value="Rotavirus_NSP2_N"/>
</dbReference>
<dbReference type="Pfam" id="PF02509">
    <property type="entry name" value="Rota_NS35_C"/>
    <property type="match status" value="1"/>
</dbReference>
<dbReference type="Pfam" id="PF21067">
    <property type="entry name" value="Rota_NS35_N"/>
    <property type="match status" value="1"/>
</dbReference>
<dbReference type="SUPFAM" id="SSF75347">
    <property type="entry name" value="Rotavirus NSP2 fragment, C-terminal domain"/>
    <property type="match status" value="1"/>
</dbReference>
<dbReference type="SUPFAM" id="SSF75574">
    <property type="entry name" value="Rotavirus NSP2 fragment, N-terminal domain"/>
    <property type="match status" value="1"/>
</dbReference>
<organism>
    <name type="scientific">Rotavirus A (strain RVA/Cow/United Kingdom/UK/1975/G6P7[5])</name>
    <name type="common">RV-A</name>
    <dbReference type="NCBI Taxonomy" id="10934"/>
    <lineage>
        <taxon>Viruses</taxon>
        <taxon>Riboviria</taxon>
        <taxon>Orthornavirae</taxon>
        <taxon>Duplornaviricota</taxon>
        <taxon>Resentoviricetes</taxon>
        <taxon>Reovirales</taxon>
        <taxon>Sedoreoviridae</taxon>
        <taxon>Rotavirus</taxon>
        <taxon>Rotavirus A</taxon>
    </lineage>
</organism>
<sequence>MAELACFCYPHLENDSYKFIPFNNLAIKCMLTAKVDRKDQDKFYNSIIYGIAPPPQFKKRYNTNDNSRGMNYETSMFNKVAVLICEALNSIKVTQSDVANVLSRVVSVRHLENLVLRRENHQDVLFHSKELLLKSVLIAIGHSKEIETTATAEGGEIVFQNAAFTMWKLTYLEHKLMPILDQNFIEYKITVNEDKPISESHVKELIAELRWQYNKFAVITHGKGHYRVVKYSSVANHADRVYATFKSNNKNGNVLEFNLLDQRIIWQNWYAFTSSMKQGNTLDICKKLLFQKMKRESNPFKGLSTDRKMDEVSQIGI</sequence>
<keyword id="KW-0067">ATP-binding</keyword>
<keyword id="KW-1035">Host cytoplasm</keyword>
<keyword id="KW-0378">Hydrolase</keyword>
<keyword id="KW-0460">Magnesium</keyword>
<keyword id="KW-0479">Metal-binding</keyword>
<keyword id="KW-0547">Nucleotide-binding</keyword>
<keyword id="KW-0694">RNA-binding</keyword>
<comment type="function">
    <text evidence="1">Participates in replication and packaging of the viral genome. Plays a crucial role, together with NSP5, in the formation of virus factories (viroplasms), which are large inclusions in the host cytoplasm where replication intermediates are assembled and viral RNA replication takes place. Displays ssRNA binding, NTPase, RNA triphosphatase (RTPase) and ATP-independent helix-unwinding activities. The unwinding activity may prepare and organize plus-strand RNAs for packaging and replication by removing interfering secondary structures. The RTPase activity plays a role in the removal of the gamma-phosphate from the rotavirus RNA minus strands of dsRNA genome segments. Participates in the selective exclusion of host proteins from stress granules (SG) and P bodies (PB). Also participates in the sequestration of these remodeled organelles in viral factories.</text>
</comment>
<comment type="cofactor">
    <cofactor evidence="1">
        <name>Mg(2+)</name>
        <dbReference type="ChEBI" id="CHEBI:18420"/>
    </cofactor>
</comment>
<comment type="subunit">
    <text evidence="1">Homooctamer. Interacts with VP1; this interaction is weak. Interacts with NSP5; this interaction leads to up-regulation of NSP5 phosphorylation and formation of viral factories. Interacts with host DCP1A, DCP1B, DDX6, EDC4 and EIF2S1/eIF2-alpha; these interactions are probably part of the sequestration of some host SGs and PBs proteins in viral factories.</text>
</comment>
<comment type="subcellular location">
    <subcellularLocation>
        <location evidence="1">Host cytoplasm</location>
    </subcellularLocation>
    <text evidence="1">Found in spherical cytoplasmic structures, called viral factories, that appear early after infection and are the site of viral replication and packaging.</text>
</comment>
<comment type="similarity">
    <text evidence="1">Belongs to the rotavirus NSP2 family.</text>
</comment>
<protein>
    <recommendedName>
        <fullName evidence="1">Non-structural protein 2</fullName>
        <shortName evidence="1">NSP2</shortName>
        <ecNumber evidence="1">3.6.4.-</ecNumber>
    </recommendedName>
    <alternativeName>
        <fullName evidence="1">NCVP3</fullName>
    </alternativeName>
    <alternativeName>
        <fullName evidence="1">Non-structural RNA-binding protein 35</fullName>
        <shortName evidence="1">NS35</shortName>
    </alternativeName>
</protein>
<evidence type="ECO:0000255" key="1">
    <source>
        <dbReference type="HAMAP-Rule" id="MF_04089"/>
    </source>
</evidence>
<accession>P03538</accession>
<organismHost>
    <name type="scientific">Bos taurus</name>
    <name type="common">Bovine</name>
    <dbReference type="NCBI Taxonomy" id="9913"/>
</organismHost>
<reference key="1">
    <citation type="journal article" date="1983" name="Nucleic Acids Res.">
        <title>Cloning and sequence of UK bovine rotavirus gene segment 7: marked sequence homology with simian rotavirus gene segment 8.</title>
        <authorList>
            <person name="Dyall-Smith M.L."/>
            <person name="Elleman T.C."/>
            <person name="Hoyne P.A."/>
            <person name="Holmes I.H."/>
            <person name="Azad A.A."/>
        </authorList>
    </citation>
    <scope>NUCLEOTIDE SEQUENCE [GENOMIC RNA]</scope>
</reference>
<proteinExistence type="inferred from homology"/>
<name>NSP2_ROTBU</name>